<accession>G7ISB0</accession>
<accession>Q4FCX5</accession>
<protein>
    <recommendedName>
        <fullName evidence="3">Fatty acid amide hydrolase</fullName>
        <ecNumber evidence="2">3.5.1.-</ecNumber>
    </recommendedName>
    <alternativeName>
        <fullName evidence="3">N-acylethanolamine amidohydrolase</fullName>
    </alternativeName>
</protein>
<dbReference type="EC" id="3.5.1.-" evidence="2"/>
<dbReference type="EMBL" id="DQ091761">
    <property type="protein sequence ID" value="AAZ04133.1"/>
    <property type="molecule type" value="mRNA"/>
</dbReference>
<dbReference type="EMBL" id="CM001218">
    <property type="protein sequence ID" value="AES63571.2"/>
    <property type="molecule type" value="Genomic_DNA"/>
</dbReference>
<dbReference type="EMBL" id="PSQE01000002">
    <property type="protein sequence ID" value="RHN71727.1"/>
    <property type="molecule type" value="Genomic_DNA"/>
</dbReference>
<dbReference type="RefSeq" id="XP_003593320.2">
    <property type="nucleotide sequence ID" value="XM_003593272.2"/>
</dbReference>
<dbReference type="SMR" id="G7ISB0"/>
<dbReference type="PaxDb" id="3880-AES63571"/>
<dbReference type="EnsemblPlants" id="rna7358">
    <property type="protein sequence ID" value="RHN71727.1"/>
    <property type="gene ID" value="gene7358"/>
</dbReference>
<dbReference type="GeneID" id="11429245"/>
<dbReference type="Gramene" id="rna7358">
    <property type="protein sequence ID" value="RHN71727.1"/>
    <property type="gene ID" value="gene7358"/>
</dbReference>
<dbReference type="KEGG" id="mtr:11429245"/>
<dbReference type="OrthoDB" id="421993at2759"/>
<dbReference type="Proteomes" id="UP000002051">
    <property type="component" value="Chromosome 2"/>
</dbReference>
<dbReference type="Proteomes" id="UP000265566">
    <property type="component" value="Chromosome 2"/>
</dbReference>
<dbReference type="GO" id="GO:0005789">
    <property type="term" value="C:endoplasmic reticulum membrane"/>
    <property type="evidence" value="ECO:0007669"/>
    <property type="project" value="UniProtKB-SubCell"/>
</dbReference>
<dbReference type="GO" id="GO:0016020">
    <property type="term" value="C:membrane"/>
    <property type="evidence" value="ECO:0000318"/>
    <property type="project" value="GO_Central"/>
</dbReference>
<dbReference type="GO" id="GO:0005886">
    <property type="term" value="C:plasma membrane"/>
    <property type="evidence" value="ECO:0007669"/>
    <property type="project" value="UniProtKB-SubCell"/>
</dbReference>
<dbReference type="GO" id="GO:0047412">
    <property type="term" value="F:N-(long-chain-acyl)ethanolamine deacylase activity"/>
    <property type="evidence" value="ECO:0000314"/>
    <property type="project" value="UniProtKB"/>
</dbReference>
<dbReference type="GO" id="GO:0016042">
    <property type="term" value="P:lipid catabolic process"/>
    <property type="evidence" value="ECO:0007669"/>
    <property type="project" value="UniProtKB-KW"/>
</dbReference>
<dbReference type="GO" id="GO:0070291">
    <property type="term" value="P:N-acylethanolamine metabolic process"/>
    <property type="evidence" value="ECO:0000314"/>
    <property type="project" value="UniProtKB"/>
</dbReference>
<dbReference type="Gene3D" id="3.90.1300.10">
    <property type="entry name" value="Amidase signature (AS) domain"/>
    <property type="match status" value="1"/>
</dbReference>
<dbReference type="InterPro" id="IPR000120">
    <property type="entry name" value="Amidase"/>
</dbReference>
<dbReference type="InterPro" id="IPR020556">
    <property type="entry name" value="Amidase_CS"/>
</dbReference>
<dbReference type="InterPro" id="IPR023631">
    <property type="entry name" value="Amidase_dom"/>
</dbReference>
<dbReference type="InterPro" id="IPR036928">
    <property type="entry name" value="AS_sf"/>
</dbReference>
<dbReference type="PANTHER" id="PTHR11895:SF156">
    <property type="entry name" value="FATTY ACID AMIDE HYDROLASE"/>
    <property type="match status" value="1"/>
</dbReference>
<dbReference type="PANTHER" id="PTHR11895">
    <property type="entry name" value="TRANSAMIDASE"/>
    <property type="match status" value="1"/>
</dbReference>
<dbReference type="Pfam" id="PF01425">
    <property type="entry name" value="Amidase"/>
    <property type="match status" value="1"/>
</dbReference>
<dbReference type="SUPFAM" id="SSF75304">
    <property type="entry name" value="Amidase signature (AS) enzymes"/>
    <property type="match status" value="1"/>
</dbReference>
<dbReference type="PROSITE" id="PS00571">
    <property type="entry name" value="AMIDASES"/>
    <property type="match status" value="1"/>
</dbReference>
<name>FAAH_MEDTR</name>
<gene>
    <name evidence="3" type="primary">FAAH</name>
    <name evidence="6" type="ordered locus">MTR_2g010180</name>
    <name evidence="7" type="ORF">MtrunA17_Chr2g0279961</name>
</gene>
<comment type="function">
    <text evidence="2 5">Catalyzes the hydrolysis of bioactive endogenous fatty acid amides to their corresponding acids (PubMed:16624618). The hydrolysis of endogenous amidated lipids terminates their participation as lipid mediators in various signaling systems (Probable). Converts a wide range of N-acylethanolamines (NAEs) to their corresponding free fatty acids and ethanolamine (PubMed:16624618).</text>
</comment>
<comment type="catalytic activity">
    <reaction evidence="2">
        <text>N-(9Z,12Z-octadecadienoyl)-ethanolamine + H2O = ethanolamine + (9Z,12Z)-octadecadienoate</text>
        <dbReference type="Rhea" id="RHEA:35567"/>
        <dbReference type="ChEBI" id="CHEBI:15377"/>
        <dbReference type="ChEBI" id="CHEBI:30245"/>
        <dbReference type="ChEBI" id="CHEBI:57603"/>
        <dbReference type="ChEBI" id="CHEBI:64032"/>
    </reaction>
    <physiologicalReaction direction="left-to-right" evidence="2">
        <dbReference type="Rhea" id="RHEA:35568"/>
    </physiologicalReaction>
</comment>
<comment type="subunit">
    <text evidence="1">Forms homodimers.</text>
</comment>
<comment type="subcellular location">
    <subcellularLocation>
        <location evidence="1">Endoplasmic reticulum membrane</location>
    </subcellularLocation>
    <subcellularLocation>
        <location evidence="1">Cell membrane</location>
    </subcellularLocation>
</comment>
<comment type="similarity">
    <text evidence="4">Belongs to the amidase family.</text>
</comment>
<feature type="chain" id="PRO_0000451044" description="Fatty acid amide hydrolase">
    <location>
        <begin position="1"/>
        <end position="607"/>
    </location>
</feature>
<feature type="active site" description="Charge relay system" evidence="1">
    <location>
        <position position="204"/>
    </location>
</feature>
<feature type="active site" description="Charge relay system" evidence="1">
    <location>
        <position position="280"/>
    </location>
</feature>
<feature type="active site" description="Acyl-ester intermediate" evidence="1">
    <location>
        <position position="304"/>
    </location>
</feature>
<feature type="binding site" evidence="1">
    <location>
        <begin position="301"/>
        <end position="304"/>
    </location>
    <ligand>
        <name>substrate</name>
    </ligand>
</feature>
<feature type="sequence conflict" description="In Ref. 1; AAZ04133." evidence="4" ref="1">
    <original>G</original>
    <variation>S</variation>
    <location>
        <position position="303"/>
    </location>
</feature>
<organism>
    <name type="scientific">Medicago truncatula</name>
    <name type="common">Barrel medic</name>
    <name type="synonym">Medicago tribuloides</name>
    <dbReference type="NCBI Taxonomy" id="3880"/>
    <lineage>
        <taxon>Eukaryota</taxon>
        <taxon>Viridiplantae</taxon>
        <taxon>Streptophyta</taxon>
        <taxon>Embryophyta</taxon>
        <taxon>Tracheophyta</taxon>
        <taxon>Spermatophyta</taxon>
        <taxon>Magnoliopsida</taxon>
        <taxon>eudicotyledons</taxon>
        <taxon>Gunneridae</taxon>
        <taxon>Pentapetalae</taxon>
        <taxon>rosids</taxon>
        <taxon>fabids</taxon>
        <taxon>Fabales</taxon>
        <taxon>Fabaceae</taxon>
        <taxon>Papilionoideae</taxon>
        <taxon>50 kb inversion clade</taxon>
        <taxon>NPAAA clade</taxon>
        <taxon>Hologalegina</taxon>
        <taxon>IRL clade</taxon>
        <taxon>Trifolieae</taxon>
        <taxon>Medicago</taxon>
    </lineage>
</organism>
<sequence>MGKKRVMVPAKDVDLSSIKYEPEIVQAPHLTGFWFRFFVRLIEAPLIGPFLLTMLKKENKIDQLLRNTVFPEEPMFKPEYPPQEKEHSVVELDEDGRPEGRVESALNCLPHYDPAKLWENSSATFRYWKIRDYAYAYQSRKVTPSMVAESIISMIEENGIDKPPTPLLLSFDAAEVRKQAAASTQRFESGNPLSILDGIFIAIKDDIDCHPHPSTGGSTWMHEVRDVKKDAVCVSRLRSCGVIFIGKTNMHEFGMGTTGNNSNYGTARNPHAPDRYTGGSSSGPAAIVASGLCSAALGTDGGGSVRIPSSLCGVVGLKINYGRTSMEGSLCDSGTVEVIGPIASTVEDAMLVYAAMLGASPANRISMKPSTPCLPTLSSDDDTDALRSLRIGIYTPWFNNVHSTEVSDKCEDALNLLSKAHGCEVVEVVIPEIVEMRTAHLVSIGSECLSSLNPDIEDGKGVKLSYDTRTSLALFQSFTAADYVAAQCIRRRIMHYFMEIFKKVDVIVTPTTGMTAPRIPPSALKSGETDMPTTGYLMRFVVPANLLGLPAISVPVGYDKEGLPIGLQVIGRPWAEATILRVAAAVEKLCGESKRRPVTYYDVLGAN</sequence>
<reference key="1">
    <citation type="journal article" date="2006" name="Biochim. Biophys. Acta">
        <title>Plant fatty acid (ethanol) amide hydrolases.</title>
        <authorList>
            <person name="Shrestha R."/>
            <person name="Kim S.C."/>
            <person name="Dyer J.M."/>
            <person name="Dixon R.A."/>
            <person name="Chapman K.D."/>
        </authorList>
    </citation>
    <scope>NUCLEOTIDE SEQUENCE [MRNA]</scope>
    <scope>FUNCTION</scope>
    <scope>CATALYTIC ACTIVITY</scope>
</reference>
<reference key="2">
    <citation type="journal article" date="2011" name="Nature">
        <title>The Medicago genome provides insight into the evolution of rhizobial symbioses.</title>
        <authorList>
            <person name="Young N.D."/>
            <person name="Debelle F."/>
            <person name="Oldroyd G.E.D."/>
            <person name="Geurts R."/>
            <person name="Cannon S.B."/>
            <person name="Udvardi M.K."/>
            <person name="Benedito V.A."/>
            <person name="Mayer K.F.X."/>
            <person name="Gouzy J."/>
            <person name="Schoof H."/>
            <person name="Van de Peer Y."/>
            <person name="Proost S."/>
            <person name="Cook D.R."/>
            <person name="Meyers B.C."/>
            <person name="Spannagl M."/>
            <person name="Cheung F."/>
            <person name="De Mita S."/>
            <person name="Krishnakumar V."/>
            <person name="Gundlach H."/>
            <person name="Zhou S."/>
            <person name="Mudge J."/>
            <person name="Bharti A.K."/>
            <person name="Murray J.D."/>
            <person name="Naoumkina M.A."/>
            <person name="Rosen B."/>
            <person name="Silverstein K.A.T."/>
            <person name="Tang H."/>
            <person name="Rombauts S."/>
            <person name="Zhao P.X."/>
            <person name="Zhou P."/>
            <person name="Barbe V."/>
            <person name="Bardou P."/>
            <person name="Bechner M."/>
            <person name="Bellec A."/>
            <person name="Berger A."/>
            <person name="Berges H."/>
            <person name="Bidwell S."/>
            <person name="Bisseling T."/>
            <person name="Choisne N."/>
            <person name="Couloux A."/>
            <person name="Denny R."/>
            <person name="Deshpande S."/>
            <person name="Dai X."/>
            <person name="Doyle J.J."/>
            <person name="Dudez A.-M."/>
            <person name="Farmer A.D."/>
            <person name="Fouteau S."/>
            <person name="Franken C."/>
            <person name="Gibelin C."/>
            <person name="Gish J."/>
            <person name="Goldstein S."/>
            <person name="Gonzalez A.J."/>
            <person name="Green P.J."/>
            <person name="Hallab A."/>
            <person name="Hartog M."/>
            <person name="Hua A."/>
            <person name="Humphray S.J."/>
            <person name="Jeong D.-H."/>
            <person name="Jing Y."/>
            <person name="Jocker A."/>
            <person name="Kenton S.M."/>
            <person name="Kim D.-J."/>
            <person name="Klee K."/>
            <person name="Lai H."/>
            <person name="Lang C."/>
            <person name="Lin S."/>
            <person name="Macmil S.L."/>
            <person name="Magdelenat G."/>
            <person name="Matthews L."/>
            <person name="McCorrison J."/>
            <person name="Monaghan E.L."/>
            <person name="Mun J.-H."/>
            <person name="Najar F.Z."/>
            <person name="Nicholson C."/>
            <person name="Noirot C."/>
            <person name="O'Bleness M."/>
            <person name="Paule C.R."/>
            <person name="Poulain J."/>
            <person name="Prion F."/>
            <person name="Qin B."/>
            <person name="Qu C."/>
            <person name="Retzel E.F."/>
            <person name="Riddle C."/>
            <person name="Sallet E."/>
            <person name="Samain S."/>
            <person name="Samson N."/>
            <person name="Sanders I."/>
            <person name="Saurat O."/>
            <person name="Scarpelli C."/>
            <person name="Schiex T."/>
            <person name="Segurens B."/>
            <person name="Severin A.J."/>
            <person name="Sherrier D.J."/>
            <person name="Shi R."/>
            <person name="Sims S."/>
            <person name="Singer S.R."/>
            <person name="Sinharoy S."/>
            <person name="Sterck L."/>
            <person name="Viollet A."/>
            <person name="Wang B.-B."/>
            <person name="Wang K."/>
            <person name="Wang M."/>
            <person name="Wang X."/>
            <person name="Warfsmann J."/>
            <person name="Weissenbach J."/>
            <person name="White D.D."/>
            <person name="White J.D."/>
            <person name="Wiley G.B."/>
            <person name="Wincker P."/>
            <person name="Xing Y."/>
            <person name="Yang L."/>
            <person name="Yao Z."/>
            <person name="Ying F."/>
            <person name="Zhai J."/>
            <person name="Zhou L."/>
            <person name="Zuber A."/>
            <person name="Denarie J."/>
            <person name="Dixon R.A."/>
            <person name="May G.D."/>
            <person name="Schwartz D.C."/>
            <person name="Rogers J."/>
            <person name="Quetier F."/>
            <person name="Town C.D."/>
            <person name="Roe B.A."/>
        </authorList>
    </citation>
    <scope>NUCLEOTIDE SEQUENCE [LARGE SCALE GENOMIC DNA]</scope>
    <source>
        <strain>cv. Jemalong A17</strain>
    </source>
</reference>
<reference key="3">
    <citation type="journal article" date="2014" name="BMC Genomics">
        <title>An improved genome release (version Mt4.0) for the model legume Medicago truncatula.</title>
        <authorList>
            <person name="Tang H."/>
            <person name="Krishnakumar V."/>
            <person name="Bidwell S."/>
            <person name="Rosen B."/>
            <person name="Chan A."/>
            <person name="Zhou S."/>
            <person name="Gentzbittel L."/>
            <person name="Childs K.L."/>
            <person name="Yandell M."/>
            <person name="Gundlach H."/>
            <person name="Mayer K.F."/>
            <person name="Schwartz D.C."/>
            <person name="Town C.D."/>
        </authorList>
    </citation>
    <scope>GENOME REANNOTATION</scope>
    <source>
        <strain>cv. Jemalong A17</strain>
    </source>
</reference>
<reference key="4">
    <citation type="journal article" date="2018" name="Nat. Plants">
        <title>Whole-genome landscape of Medicago truncatula symbiotic genes.</title>
        <authorList>
            <person name="Pecrix Y."/>
            <person name="Staton S.E."/>
            <person name="Sallet E."/>
            <person name="Lelandais-Briere C."/>
            <person name="Moreau S."/>
            <person name="Carrere S."/>
            <person name="Blein T."/>
            <person name="Jardinaud M.F."/>
            <person name="Latrasse D."/>
            <person name="Zouine M."/>
            <person name="Zahm M."/>
            <person name="Kreplak J."/>
            <person name="Mayjonade B."/>
            <person name="Satge C."/>
            <person name="Perez M."/>
            <person name="Cauet S."/>
            <person name="Marande W."/>
            <person name="Chantry-Darmon C."/>
            <person name="Lopez-Roques C."/>
            <person name="Bouchez O."/>
            <person name="Berard A."/>
            <person name="Debelle F."/>
            <person name="Munos S."/>
            <person name="Bendahmane A."/>
            <person name="Berges H."/>
            <person name="Niebel A."/>
            <person name="Buitink J."/>
            <person name="Frugier F."/>
            <person name="Benhamed M."/>
            <person name="Crespi M."/>
            <person name="Gouzy J."/>
            <person name="Gamas P."/>
        </authorList>
    </citation>
    <scope>NUCLEOTIDE SEQUENCE [LARGE SCALE GENOMIC DNA]</scope>
    <source>
        <strain>cv. Jemalong A17</strain>
    </source>
</reference>
<proteinExistence type="evidence at protein level"/>
<keyword id="KW-1003">Cell membrane</keyword>
<keyword id="KW-0256">Endoplasmic reticulum</keyword>
<keyword id="KW-0378">Hydrolase</keyword>
<keyword id="KW-0442">Lipid degradation</keyword>
<keyword id="KW-0443">Lipid metabolism</keyword>
<keyword id="KW-0472">Membrane</keyword>
<keyword id="KW-1185">Reference proteome</keyword>
<evidence type="ECO:0000250" key="1">
    <source>
        <dbReference type="UniProtKB" id="Q7XJJ7"/>
    </source>
</evidence>
<evidence type="ECO:0000269" key="2">
    <source>
    </source>
</evidence>
<evidence type="ECO:0000303" key="3">
    <source>
    </source>
</evidence>
<evidence type="ECO:0000305" key="4"/>
<evidence type="ECO:0000305" key="5">
    <source>
    </source>
</evidence>
<evidence type="ECO:0000312" key="6">
    <source>
        <dbReference type="EMBL" id="AES63571.2"/>
    </source>
</evidence>
<evidence type="ECO:0000312" key="7">
    <source>
        <dbReference type="EMBL" id="RHN71727.1"/>
    </source>
</evidence>